<feature type="chain" id="PRO_1000001474" description="Holliday junction branch migration complex subunit RuvB">
    <location>
        <begin position="1"/>
        <end position="337"/>
    </location>
</feature>
<feature type="region of interest" description="Disordered" evidence="2">
    <location>
        <begin position="1"/>
        <end position="27"/>
    </location>
</feature>
<feature type="region of interest" description="Large ATPase domain (RuvB-L)" evidence="1">
    <location>
        <begin position="4"/>
        <end position="187"/>
    </location>
</feature>
<feature type="region of interest" description="Small ATPAse domain (RuvB-S)" evidence="1">
    <location>
        <begin position="188"/>
        <end position="258"/>
    </location>
</feature>
<feature type="region of interest" description="Head domain (RuvB-H)" evidence="1">
    <location>
        <begin position="261"/>
        <end position="337"/>
    </location>
</feature>
<feature type="binding site" evidence="1">
    <location>
        <position position="27"/>
    </location>
    <ligand>
        <name>ATP</name>
        <dbReference type="ChEBI" id="CHEBI:30616"/>
    </ligand>
</feature>
<feature type="binding site" evidence="1">
    <location>
        <position position="68"/>
    </location>
    <ligand>
        <name>ATP</name>
        <dbReference type="ChEBI" id="CHEBI:30616"/>
    </ligand>
</feature>
<feature type="binding site" evidence="1">
    <location>
        <position position="71"/>
    </location>
    <ligand>
        <name>ATP</name>
        <dbReference type="ChEBI" id="CHEBI:30616"/>
    </ligand>
</feature>
<feature type="binding site" evidence="1">
    <location>
        <position position="72"/>
    </location>
    <ligand>
        <name>ATP</name>
        <dbReference type="ChEBI" id="CHEBI:30616"/>
    </ligand>
</feature>
<feature type="binding site" evidence="1">
    <location>
        <position position="72"/>
    </location>
    <ligand>
        <name>Mg(2+)</name>
        <dbReference type="ChEBI" id="CHEBI:18420"/>
    </ligand>
</feature>
<feature type="binding site" evidence="1">
    <location>
        <position position="73"/>
    </location>
    <ligand>
        <name>ATP</name>
        <dbReference type="ChEBI" id="CHEBI:30616"/>
    </ligand>
</feature>
<feature type="binding site" evidence="1">
    <location>
        <begin position="134"/>
        <end position="136"/>
    </location>
    <ligand>
        <name>ATP</name>
        <dbReference type="ChEBI" id="CHEBI:30616"/>
    </ligand>
</feature>
<feature type="binding site" evidence="1">
    <location>
        <position position="177"/>
    </location>
    <ligand>
        <name>ATP</name>
        <dbReference type="ChEBI" id="CHEBI:30616"/>
    </ligand>
</feature>
<feature type="binding site" evidence="1">
    <location>
        <position position="187"/>
    </location>
    <ligand>
        <name>ATP</name>
        <dbReference type="ChEBI" id="CHEBI:30616"/>
    </ligand>
</feature>
<feature type="binding site" evidence="1">
    <location>
        <position position="224"/>
    </location>
    <ligand>
        <name>ATP</name>
        <dbReference type="ChEBI" id="CHEBI:30616"/>
    </ligand>
</feature>
<feature type="binding site" evidence="1">
    <location>
        <position position="297"/>
    </location>
    <ligand>
        <name>DNA</name>
        <dbReference type="ChEBI" id="CHEBI:16991"/>
    </ligand>
</feature>
<feature type="binding site" evidence="1">
    <location>
        <position position="316"/>
    </location>
    <ligand>
        <name>DNA</name>
        <dbReference type="ChEBI" id="CHEBI:16991"/>
    </ligand>
</feature>
<feature type="binding site" evidence="1">
    <location>
        <position position="321"/>
    </location>
    <ligand>
        <name>DNA</name>
        <dbReference type="ChEBI" id="CHEBI:16991"/>
    </ligand>
</feature>
<evidence type="ECO:0000255" key="1">
    <source>
        <dbReference type="HAMAP-Rule" id="MF_00016"/>
    </source>
</evidence>
<evidence type="ECO:0000256" key="2">
    <source>
        <dbReference type="SAM" id="MobiDB-lite"/>
    </source>
</evidence>
<reference key="1">
    <citation type="submission" date="2007-03" db="EMBL/GenBank/DDBJ databases">
        <title>Complete sequence of Shewanella loihica PV-4.</title>
        <authorList>
            <consortium name="US DOE Joint Genome Institute"/>
            <person name="Copeland A."/>
            <person name="Lucas S."/>
            <person name="Lapidus A."/>
            <person name="Barry K."/>
            <person name="Detter J.C."/>
            <person name="Glavina del Rio T."/>
            <person name="Hammon N."/>
            <person name="Israni S."/>
            <person name="Dalin E."/>
            <person name="Tice H."/>
            <person name="Pitluck S."/>
            <person name="Chain P."/>
            <person name="Malfatti S."/>
            <person name="Shin M."/>
            <person name="Vergez L."/>
            <person name="Schmutz J."/>
            <person name="Larimer F."/>
            <person name="Land M."/>
            <person name="Hauser L."/>
            <person name="Kyrpides N."/>
            <person name="Mikhailova N."/>
            <person name="Romine M.F."/>
            <person name="Serres G."/>
            <person name="Fredrickson J."/>
            <person name="Tiedje J."/>
            <person name="Richardson P."/>
        </authorList>
    </citation>
    <scope>NUCLEOTIDE SEQUENCE [LARGE SCALE GENOMIC DNA]</scope>
    <source>
        <strain>ATCC BAA-1088 / PV-4</strain>
    </source>
</reference>
<sequence length="337" mass="37393">MIEADRLVHAQPQGTEERDEQIDRAMRPKLLDEYTGQDDTRAQLKVFIEAAQKRGEALDHMLIYGPPGLGKTTLAMIVANEMGVNIKSTSGPVLEKAGDLAALLTNLEAGDVLFIDEIHRLSPVVEEILYPAMEDYQLDIMIGEGPAARSIKLELPPFTLIGATTRAGALTSPLRARFGIPLRLEFYNVKDLSSIVTRSAKVLELPIDQEGAVEVARRSRGTPRIANRLLRRVRDYAEVKHDGEVNKVVAESALDMLDVDVEGFDYMDRKLLLAIIDKFMGGPVGLDNLAAAIGEERETIEDVLEPFLIQQGFIQRTPRGRIATARAYQHFNLIQPE</sequence>
<proteinExistence type="inferred from homology"/>
<comment type="function">
    <text evidence="1">The RuvA-RuvB-RuvC complex processes Holliday junction (HJ) DNA during genetic recombination and DNA repair, while the RuvA-RuvB complex plays an important role in the rescue of blocked DNA replication forks via replication fork reversal (RFR). RuvA specifically binds to HJ cruciform DNA, conferring on it an open structure. The RuvB hexamer acts as an ATP-dependent pump, pulling dsDNA into and through the RuvAB complex. RuvB forms 2 homohexamers on either side of HJ DNA bound by 1 or 2 RuvA tetramers; 4 subunits per hexamer contact DNA at a time. Coordinated motions by a converter formed by DNA-disengaged RuvB subunits stimulates ATP hydrolysis and nucleotide exchange. Immobilization of the converter enables RuvB to convert the ATP-contained energy into a lever motion, pulling 2 nucleotides of DNA out of the RuvA tetramer per ATP hydrolyzed, thus driving DNA branch migration. The RuvB motors rotate together with the DNA substrate, which together with the progressing nucleotide cycle form the mechanistic basis for DNA recombination by continuous HJ branch migration. Branch migration allows RuvC to scan DNA until it finds its consensus sequence, where it cleaves and resolves cruciform DNA.</text>
</comment>
<comment type="catalytic activity">
    <reaction evidence="1">
        <text>ATP + H2O = ADP + phosphate + H(+)</text>
        <dbReference type="Rhea" id="RHEA:13065"/>
        <dbReference type="ChEBI" id="CHEBI:15377"/>
        <dbReference type="ChEBI" id="CHEBI:15378"/>
        <dbReference type="ChEBI" id="CHEBI:30616"/>
        <dbReference type="ChEBI" id="CHEBI:43474"/>
        <dbReference type="ChEBI" id="CHEBI:456216"/>
    </reaction>
</comment>
<comment type="subunit">
    <text evidence="1">Homohexamer. Forms an RuvA(8)-RuvB(12)-Holliday junction (HJ) complex. HJ DNA is sandwiched between 2 RuvA tetramers; dsDNA enters through RuvA and exits via RuvB. An RuvB hexamer assembles on each DNA strand where it exits the tetramer. Each RuvB hexamer is contacted by two RuvA subunits (via domain III) on 2 adjacent RuvB subunits; this complex drives branch migration. In the full resolvosome a probable DNA-RuvA(4)-RuvB(12)-RuvC(2) complex forms which resolves the HJ.</text>
</comment>
<comment type="subcellular location">
    <subcellularLocation>
        <location evidence="1">Cytoplasm</location>
    </subcellularLocation>
</comment>
<comment type="domain">
    <text evidence="1">Has 3 domains, the large (RuvB-L) and small ATPase (RuvB-S) domains and the C-terminal head (RuvB-H) domain. The head domain binds DNA, while the ATPase domains jointly bind ATP, ADP or are empty depending on the state of the subunit in the translocation cycle. During a single DNA translocation step the structure of each domain remains the same, but their relative positions change.</text>
</comment>
<comment type="similarity">
    <text evidence="1">Belongs to the RuvB family.</text>
</comment>
<dbReference type="EC" id="3.6.4.-" evidence="1"/>
<dbReference type="EMBL" id="CP000606">
    <property type="protein sequence ID" value="ABO23941.1"/>
    <property type="molecule type" value="Genomic_DNA"/>
</dbReference>
<dbReference type="RefSeq" id="WP_011865873.1">
    <property type="nucleotide sequence ID" value="NC_009092.1"/>
</dbReference>
<dbReference type="SMR" id="A3QEP3"/>
<dbReference type="STRING" id="323850.Shew_2075"/>
<dbReference type="KEGG" id="slo:Shew_2075"/>
<dbReference type="eggNOG" id="COG2255">
    <property type="taxonomic scope" value="Bacteria"/>
</dbReference>
<dbReference type="HOGENOM" id="CLU_055599_1_0_6"/>
<dbReference type="OrthoDB" id="9804478at2"/>
<dbReference type="Proteomes" id="UP000001558">
    <property type="component" value="Chromosome"/>
</dbReference>
<dbReference type="GO" id="GO:0005737">
    <property type="term" value="C:cytoplasm"/>
    <property type="evidence" value="ECO:0007669"/>
    <property type="project" value="UniProtKB-SubCell"/>
</dbReference>
<dbReference type="GO" id="GO:0048476">
    <property type="term" value="C:Holliday junction resolvase complex"/>
    <property type="evidence" value="ECO:0007669"/>
    <property type="project" value="UniProtKB-UniRule"/>
</dbReference>
<dbReference type="GO" id="GO:0005524">
    <property type="term" value="F:ATP binding"/>
    <property type="evidence" value="ECO:0007669"/>
    <property type="project" value="UniProtKB-UniRule"/>
</dbReference>
<dbReference type="GO" id="GO:0016887">
    <property type="term" value="F:ATP hydrolysis activity"/>
    <property type="evidence" value="ECO:0007669"/>
    <property type="project" value="InterPro"/>
</dbReference>
<dbReference type="GO" id="GO:0000400">
    <property type="term" value="F:four-way junction DNA binding"/>
    <property type="evidence" value="ECO:0007669"/>
    <property type="project" value="UniProtKB-UniRule"/>
</dbReference>
<dbReference type="GO" id="GO:0009378">
    <property type="term" value="F:four-way junction helicase activity"/>
    <property type="evidence" value="ECO:0007669"/>
    <property type="project" value="InterPro"/>
</dbReference>
<dbReference type="GO" id="GO:0006310">
    <property type="term" value="P:DNA recombination"/>
    <property type="evidence" value="ECO:0007669"/>
    <property type="project" value="UniProtKB-UniRule"/>
</dbReference>
<dbReference type="GO" id="GO:0006281">
    <property type="term" value="P:DNA repair"/>
    <property type="evidence" value="ECO:0007669"/>
    <property type="project" value="UniProtKB-UniRule"/>
</dbReference>
<dbReference type="CDD" id="cd00009">
    <property type="entry name" value="AAA"/>
    <property type="match status" value="1"/>
</dbReference>
<dbReference type="FunFam" id="1.10.10.10:FF:000086">
    <property type="entry name" value="Holliday junction ATP-dependent DNA helicase RuvB"/>
    <property type="match status" value="1"/>
</dbReference>
<dbReference type="FunFam" id="1.10.8.60:FF:000023">
    <property type="entry name" value="Holliday junction ATP-dependent DNA helicase RuvB"/>
    <property type="match status" value="1"/>
</dbReference>
<dbReference type="FunFam" id="3.40.50.300:FF:000073">
    <property type="entry name" value="Holliday junction ATP-dependent DNA helicase RuvB"/>
    <property type="match status" value="1"/>
</dbReference>
<dbReference type="Gene3D" id="1.10.8.60">
    <property type="match status" value="1"/>
</dbReference>
<dbReference type="Gene3D" id="3.40.50.300">
    <property type="entry name" value="P-loop containing nucleotide triphosphate hydrolases"/>
    <property type="match status" value="1"/>
</dbReference>
<dbReference type="Gene3D" id="1.10.10.10">
    <property type="entry name" value="Winged helix-like DNA-binding domain superfamily/Winged helix DNA-binding domain"/>
    <property type="match status" value="1"/>
</dbReference>
<dbReference type="HAMAP" id="MF_00016">
    <property type="entry name" value="DNA_HJ_migration_RuvB"/>
    <property type="match status" value="1"/>
</dbReference>
<dbReference type="InterPro" id="IPR003593">
    <property type="entry name" value="AAA+_ATPase"/>
</dbReference>
<dbReference type="InterPro" id="IPR041445">
    <property type="entry name" value="AAA_lid_4"/>
</dbReference>
<dbReference type="InterPro" id="IPR004605">
    <property type="entry name" value="DNA_helicase_Holl-junc_RuvB"/>
</dbReference>
<dbReference type="InterPro" id="IPR027417">
    <property type="entry name" value="P-loop_NTPase"/>
</dbReference>
<dbReference type="InterPro" id="IPR008824">
    <property type="entry name" value="RuvB-like_N"/>
</dbReference>
<dbReference type="InterPro" id="IPR008823">
    <property type="entry name" value="RuvB_C"/>
</dbReference>
<dbReference type="InterPro" id="IPR036388">
    <property type="entry name" value="WH-like_DNA-bd_sf"/>
</dbReference>
<dbReference type="InterPro" id="IPR036390">
    <property type="entry name" value="WH_DNA-bd_sf"/>
</dbReference>
<dbReference type="NCBIfam" id="NF000868">
    <property type="entry name" value="PRK00080.1"/>
    <property type="match status" value="1"/>
</dbReference>
<dbReference type="NCBIfam" id="TIGR00635">
    <property type="entry name" value="ruvB"/>
    <property type="match status" value="1"/>
</dbReference>
<dbReference type="PANTHER" id="PTHR42848">
    <property type="match status" value="1"/>
</dbReference>
<dbReference type="PANTHER" id="PTHR42848:SF1">
    <property type="entry name" value="HOLLIDAY JUNCTION BRANCH MIGRATION COMPLEX SUBUNIT RUVB"/>
    <property type="match status" value="1"/>
</dbReference>
<dbReference type="Pfam" id="PF17864">
    <property type="entry name" value="AAA_lid_4"/>
    <property type="match status" value="1"/>
</dbReference>
<dbReference type="Pfam" id="PF05491">
    <property type="entry name" value="RuvB_C"/>
    <property type="match status" value="1"/>
</dbReference>
<dbReference type="Pfam" id="PF05496">
    <property type="entry name" value="RuvB_N"/>
    <property type="match status" value="1"/>
</dbReference>
<dbReference type="SMART" id="SM00382">
    <property type="entry name" value="AAA"/>
    <property type="match status" value="1"/>
</dbReference>
<dbReference type="SUPFAM" id="SSF52540">
    <property type="entry name" value="P-loop containing nucleoside triphosphate hydrolases"/>
    <property type="match status" value="1"/>
</dbReference>
<dbReference type="SUPFAM" id="SSF46785">
    <property type="entry name" value="Winged helix' DNA-binding domain"/>
    <property type="match status" value="1"/>
</dbReference>
<gene>
    <name evidence="1" type="primary">ruvB</name>
    <name type="ordered locus">Shew_2075</name>
</gene>
<organism>
    <name type="scientific">Shewanella loihica (strain ATCC BAA-1088 / PV-4)</name>
    <dbReference type="NCBI Taxonomy" id="323850"/>
    <lineage>
        <taxon>Bacteria</taxon>
        <taxon>Pseudomonadati</taxon>
        <taxon>Pseudomonadota</taxon>
        <taxon>Gammaproteobacteria</taxon>
        <taxon>Alteromonadales</taxon>
        <taxon>Shewanellaceae</taxon>
        <taxon>Shewanella</taxon>
    </lineage>
</organism>
<name>RUVB_SHELP</name>
<protein>
    <recommendedName>
        <fullName evidence="1">Holliday junction branch migration complex subunit RuvB</fullName>
        <ecNumber evidence="1">3.6.4.-</ecNumber>
    </recommendedName>
</protein>
<accession>A3QEP3</accession>
<keyword id="KW-0067">ATP-binding</keyword>
<keyword id="KW-0963">Cytoplasm</keyword>
<keyword id="KW-0227">DNA damage</keyword>
<keyword id="KW-0233">DNA recombination</keyword>
<keyword id="KW-0234">DNA repair</keyword>
<keyword id="KW-0238">DNA-binding</keyword>
<keyword id="KW-0378">Hydrolase</keyword>
<keyword id="KW-0547">Nucleotide-binding</keyword>
<keyword id="KW-1185">Reference proteome</keyword>